<comment type="subunit">
    <text evidence="1">Part of the 50S ribosomal subunit. Contacts protein L32.</text>
</comment>
<comment type="similarity">
    <text evidence="1">Belongs to the bacterial ribosomal protein bL17 family.</text>
</comment>
<gene>
    <name evidence="1" type="primary">rplQ</name>
    <name type="ordered locus">gbs0085</name>
</gene>
<keyword id="KW-0687">Ribonucleoprotein</keyword>
<keyword id="KW-0689">Ribosomal protein</keyword>
<proteinExistence type="inferred from homology"/>
<protein>
    <recommendedName>
        <fullName evidence="1">Large ribosomal subunit protein bL17</fullName>
    </recommendedName>
    <alternativeName>
        <fullName evidence="2">50S ribosomal protein L17</fullName>
    </alternativeName>
</protein>
<sequence>MAYRKLGRTSSQRKAMLRDLTTDLLINESIVTTEARAKEIRKTVEKMITLGKRGDLHARRQAAAYVRNEIASENYDEASDKYTSTTALQKLFDDIAPRYAERNGGYTRILKTEPRRGDAAPMAIIELV</sequence>
<accession>Q8E7R8</accession>
<dbReference type="EMBL" id="AL766843">
    <property type="protein sequence ID" value="CAD45730.1"/>
    <property type="molecule type" value="Genomic_DNA"/>
</dbReference>
<dbReference type="RefSeq" id="WP_000331497.1">
    <property type="nucleotide sequence ID" value="NC_004368.1"/>
</dbReference>
<dbReference type="SMR" id="Q8E7R8"/>
<dbReference type="GeneID" id="66885045"/>
<dbReference type="KEGG" id="san:rplQ"/>
<dbReference type="eggNOG" id="COG0203">
    <property type="taxonomic scope" value="Bacteria"/>
</dbReference>
<dbReference type="HOGENOM" id="CLU_074407_2_2_9"/>
<dbReference type="Proteomes" id="UP000000823">
    <property type="component" value="Chromosome"/>
</dbReference>
<dbReference type="GO" id="GO:0022625">
    <property type="term" value="C:cytosolic large ribosomal subunit"/>
    <property type="evidence" value="ECO:0007669"/>
    <property type="project" value="TreeGrafter"/>
</dbReference>
<dbReference type="GO" id="GO:0003735">
    <property type="term" value="F:structural constituent of ribosome"/>
    <property type="evidence" value="ECO:0007669"/>
    <property type="project" value="InterPro"/>
</dbReference>
<dbReference type="GO" id="GO:0006412">
    <property type="term" value="P:translation"/>
    <property type="evidence" value="ECO:0007669"/>
    <property type="project" value="UniProtKB-UniRule"/>
</dbReference>
<dbReference type="FunFam" id="3.90.1030.10:FF:000002">
    <property type="entry name" value="50S ribosomal protein L17"/>
    <property type="match status" value="1"/>
</dbReference>
<dbReference type="Gene3D" id="3.90.1030.10">
    <property type="entry name" value="Ribosomal protein L17"/>
    <property type="match status" value="1"/>
</dbReference>
<dbReference type="HAMAP" id="MF_01368">
    <property type="entry name" value="Ribosomal_bL17"/>
    <property type="match status" value="1"/>
</dbReference>
<dbReference type="InterPro" id="IPR000456">
    <property type="entry name" value="Ribosomal_bL17"/>
</dbReference>
<dbReference type="InterPro" id="IPR047859">
    <property type="entry name" value="Ribosomal_bL17_CS"/>
</dbReference>
<dbReference type="InterPro" id="IPR036373">
    <property type="entry name" value="Ribosomal_bL17_sf"/>
</dbReference>
<dbReference type="NCBIfam" id="TIGR00059">
    <property type="entry name" value="L17"/>
    <property type="match status" value="1"/>
</dbReference>
<dbReference type="PANTHER" id="PTHR14413:SF16">
    <property type="entry name" value="LARGE RIBOSOMAL SUBUNIT PROTEIN BL17M"/>
    <property type="match status" value="1"/>
</dbReference>
<dbReference type="PANTHER" id="PTHR14413">
    <property type="entry name" value="RIBOSOMAL PROTEIN L17"/>
    <property type="match status" value="1"/>
</dbReference>
<dbReference type="Pfam" id="PF01196">
    <property type="entry name" value="Ribosomal_L17"/>
    <property type="match status" value="1"/>
</dbReference>
<dbReference type="SUPFAM" id="SSF64263">
    <property type="entry name" value="Prokaryotic ribosomal protein L17"/>
    <property type="match status" value="1"/>
</dbReference>
<dbReference type="PROSITE" id="PS01167">
    <property type="entry name" value="RIBOSOMAL_L17"/>
    <property type="match status" value="1"/>
</dbReference>
<organism>
    <name type="scientific">Streptococcus agalactiae serotype III (strain NEM316)</name>
    <dbReference type="NCBI Taxonomy" id="211110"/>
    <lineage>
        <taxon>Bacteria</taxon>
        <taxon>Bacillati</taxon>
        <taxon>Bacillota</taxon>
        <taxon>Bacilli</taxon>
        <taxon>Lactobacillales</taxon>
        <taxon>Streptococcaceae</taxon>
        <taxon>Streptococcus</taxon>
    </lineage>
</organism>
<feature type="chain" id="PRO_1000055953" description="Large ribosomal subunit protein bL17">
    <location>
        <begin position="1"/>
        <end position="128"/>
    </location>
</feature>
<name>RL17_STRA3</name>
<reference key="1">
    <citation type="journal article" date="2002" name="Mol. Microbiol.">
        <title>Genome sequence of Streptococcus agalactiae, a pathogen causing invasive neonatal disease.</title>
        <authorList>
            <person name="Glaser P."/>
            <person name="Rusniok C."/>
            <person name="Buchrieser C."/>
            <person name="Chevalier F."/>
            <person name="Frangeul L."/>
            <person name="Msadek T."/>
            <person name="Zouine M."/>
            <person name="Couve E."/>
            <person name="Lalioui L."/>
            <person name="Poyart C."/>
            <person name="Trieu-Cuot P."/>
            <person name="Kunst F."/>
        </authorList>
    </citation>
    <scope>NUCLEOTIDE SEQUENCE [LARGE SCALE GENOMIC DNA]</scope>
    <source>
        <strain>NEM316</strain>
    </source>
</reference>
<evidence type="ECO:0000255" key="1">
    <source>
        <dbReference type="HAMAP-Rule" id="MF_01368"/>
    </source>
</evidence>
<evidence type="ECO:0000305" key="2"/>